<gene>
    <name evidence="1" type="primary">sstT</name>
    <name type="ordered locus">Ping_0504</name>
</gene>
<reference key="1">
    <citation type="journal article" date="2008" name="BMC Genomics">
        <title>Genomics of an extreme psychrophile, Psychromonas ingrahamii.</title>
        <authorList>
            <person name="Riley M."/>
            <person name="Staley J.T."/>
            <person name="Danchin A."/>
            <person name="Wang T.Z."/>
            <person name="Brettin T.S."/>
            <person name="Hauser L.J."/>
            <person name="Land M.L."/>
            <person name="Thompson L.S."/>
        </authorList>
    </citation>
    <scope>NUCLEOTIDE SEQUENCE [LARGE SCALE GENOMIC DNA]</scope>
    <source>
        <strain>DSM 17664 / CCUG 51855 / 37</strain>
    </source>
</reference>
<sequence length="425" mass="44345">MTPTPTLIQRFLNGSLVLQIVIGIVAGLILASFSPTSALSVSFLGSLFVSALKAVAPILVFVLVASSIANQQKETRTNLKPIIKLYLLGTLFAASTAVMVSYFFPTTLVLVATDIQATPPNGILEVLNTLLFKIVDNPVNALVSGNFIGILAWAAGLGFALQRANQSTKQALHDISNAVTRIVHLVIRFAPLGIFGLVAGTIAETGFDALFGYTHLLAVLLGCMILIALVINPIIVYGKTKKNPYPLIFRCLRESGVTAFFTRSSAANIPVNMALCEKLELHKDTYSVSIPLGATINMAGASITITVLTLAAVHTLGIEFDIATAILLSVVAAVSACGASGVAGGSLLLIPLACGLFGVPNEVAMQVVAIGFIIGVVQDSAETALNSSTDVIFTAAACYAAEELPAADTIETLETLETLETTAKA</sequence>
<feature type="chain" id="PRO_0000309115" description="Serine/threonine transporter SstT">
    <location>
        <begin position="1"/>
        <end position="425"/>
    </location>
</feature>
<feature type="transmembrane region" description="Helical" evidence="1">
    <location>
        <begin position="11"/>
        <end position="31"/>
    </location>
</feature>
<feature type="transmembrane region" description="Helical" evidence="1">
    <location>
        <begin position="43"/>
        <end position="63"/>
    </location>
</feature>
<feature type="transmembrane region" description="Helical" evidence="1">
    <location>
        <begin position="91"/>
        <end position="111"/>
    </location>
</feature>
<feature type="transmembrane region" description="Helical" evidence="1">
    <location>
        <begin position="141"/>
        <end position="161"/>
    </location>
</feature>
<feature type="transmembrane region" description="Helical" evidence="1">
    <location>
        <begin position="182"/>
        <end position="202"/>
    </location>
</feature>
<feature type="transmembrane region" description="Helical" evidence="1">
    <location>
        <begin position="216"/>
        <end position="236"/>
    </location>
</feature>
<feature type="transmembrane region" description="Helical" evidence="1">
    <location>
        <begin position="290"/>
        <end position="310"/>
    </location>
</feature>
<feature type="transmembrane region" description="Helical" evidence="1">
    <location>
        <begin position="316"/>
        <end position="336"/>
    </location>
</feature>
<feature type="transmembrane region" description="Helical" evidence="1">
    <location>
        <begin position="363"/>
        <end position="383"/>
    </location>
</feature>
<proteinExistence type="inferred from homology"/>
<comment type="function">
    <text evidence="1">Involved in the import of serine and threonine into the cell, with the concomitant import of sodium (symport system).</text>
</comment>
<comment type="catalytic activity">
    <reaction evidence="1">
        <text>L-serine(in) + Na(+)(in) = L-serine(out) + Na(+)(out)</text>
        <dbReference type="Rhea" id="RHEA:29575"/>
        <dbReference type="ChEBI" id="CHEBI:29101"/>
        <dbReference type="ChEBI" id="CHEBI:33384"/>
    </reaction>
    <physiologicalReaction direction="right-to-left" evidence="1">
        <dbReference type="Rhea" id="RHEA:29577"/>
    </physiologicalReaction>
</comment>
<comment type="catalytic activity">
    <reaction evidence="1">
        <text>L-threonine(in) + Na(+)(in) = L-threonine(out) + Na(+)(out)</text>
        <dbReference type="Rhea" id="RHEA:69999"/>
        <dbReference type="ChEBI" id="CHEBI:29101"/>
        <dbReference type="ChEBI" id="CHEBI:57926"/>
    </reaction>
    <physiologicalReaction direction="right-to-left" evidence="1">
        <dbReference type="Rhea" id="RHEA:70001"/>
    </physiologicalReaction>
</comment>
<comment type="subcellular location">
    <subcellularLocation>
        <location evidence="1">Cell inner membrane</location>
        <topology evidence="1">Multi-pass membrane protein</topology>
    </subcellularLocation>
</comment>
<comment type="similarity">
    <text evidence="1">Belongs to the dicarboxylate/amino acid:cation symporter (DAACS) (TC 2.A.23) family.</text>
</comment>
<protein>
    <recommendedName>
        <fullName evidence="1">Serine/threonine transporter SstT</fullName>
    </recommendedName>
    <alternativeName>
        <fullName evidence="1">Na(+)/serine-threonine symporter</fullName>
    </alternativeName>
</protein>
<evidence type="ECO:0000255" key="1">
    <source>
        <dbReference type="HAMAP-Rule" id="MF_01582"/>
    </source>
</evidence>
<dbReference type="EMBL" id="CP000510">
    <property type="protein sequence ID" value="ABM02359.1"/>
    <property type="molecule type" value="Genomic_DNA"/>
</dbReference>
<dbReference type="RefSeq" id="WP_011768918.1">
    <property type="nucleotide sequence ID" value="NC_008709.1"/>
</dbReference>
<dbReference type="SMR" id="A1SS94"/>
<dbReference type="KEGG" id="pin:Ping_0504"/>
<dbReference type="eggNOG" id="COG3633">
    <property type="taxonomic scope" value="Bacteria"/>
</dbReference>
<dbReference type="HOGENOM" id="CLU_044581_0_0_6"/>
<dbReference type="OrthoDB" id="9768885at2"/>
<dbReference type="Proteomes" id="UP000000639">
    <property type="component" value="Chromosome"/>
</dbReference>
<dbReference type="GO" id="GO:0005886">
    <property type="term" value="C:plasma membrane"/>
    <property type="evidence" value="ECO:0007669"/>
    <property type="project" value="UniProtKB-SubCell"/>
</dbReference>
<dbReference type="GO" id="GO:0005295">
    <property type="term" value="F:neutral L-amino acid:sodium symporter activity"/>
    <property type="evidence" value="ECO:0007669"/>
    <property type="project" value="TreeGrafter"/>
</dbReference>
<dbReference type="GO" id="GO:0032329">
    <property type="term" value="P:serine transport"/>
    <property type="evidence" value="ECO:0007669"/>
    <property type="project" value="InterPro"/>
</dbReference>
<dbReference type="GO" id="GO:0015826">
    <property type="term" value="P:threonine transport"/>
    <property type="evidence" value="ECO:0007669"/>
    <property type="project" value="InterPro"/>
</dbReference>
<dbReference type="FunFam" id="1.10.3860.10:FF:000003">
    <property type="entry name" value="Serine/threonine transporter sstT"/>
    <property type="match status" value="1"/>
</dbReference>
<dbReference type="Gene3D" id="1.10.3860.10">
    <property type="entry name" value="Sodium:dicarboxylate symporter"/>
    <property type="match status" value="1"/>
</dbReference>
<dbReference type="HAMAP" id="MF_01582">
    <property type="entry name" value="Ser_Thr_transp_SstT"/>
    <property type="match status" value="1"/>
</dbReference>
<dbReference type="InterPro" id="IPR001991">
    <property type="entry name" value="Na-dicarboxylate_symporter"/>
</dbReference>
<dbReference type="InterPro" id="IPR036458">
    <property type="entry name" value="Na:dicarbo_symporter_sf"/>
</dbReference>
<dbReference type="InterPro" id="IPR023025">
    <property type="entry name" value="Ser_Thr_transp_SstT"/>
</dbReference>
<dbReference type="NCBIfam" id="NF010151">
    <property type="entry name" value="PRK13628.1"/>
    <property type="match status" value="1"/>
</dbReference>
<dbReference type="PANTHER" id="PTHR42865">
    <property type="entry name" value="PROTON/GLUTAMATE-ASPARTATE SYMPORTER"/>
    <property type="match status" value="1"/>
</dbReference>
<dbReference type="PANTHER" id="PTHR42865:SF8">
    <property type="entry name" value="SERINE_THREONINE TRANSPORTER SSTT"/>
    <property type="match status" value="1"/>
</dbReference>
<dbReference type="Pfam" id="PF00375">
    <property type="entry name" value="SDF"/>
    <property type="match status" value="1"/>
</dbReference>
<dbReference type="PRINTS" id="PR00173">
    <property type="entry name" value="EDTRNSPORT"/>
</dbReference>
<dbReference type="SUPFAM" id="SSF118215">
    <property type="entry name" value="Proton glutamate symport protein"/>
    <property type="match status" value="1"/>
</dbReference>
<keyword id="KW-0029">Amino-acid transport</keyword>
<keyword id="KW-0997">Cell inner membrane</keyword>
<keyword id="KW-1003">Cell membrane</keyword>
<keyword id="KW-0472">Membrane</keyword>
<keyword id="KW-1185">Reference proteome</keyword>
<keyword id="KW-0769">Symport</keyword>
<keyword id="KW-0812">Transmembrane</keyword>
<keyword id="KW-1133">Transmembrane helix</keyword>
<keyword id="KW-0813">Transport</keyword>
<name>SSTT_PSYIN</name>
<organism>
    <name type="scientific">Psychromonas ingrahamii (strain DSM 17664 / CCUG 51855 / 37)</name>
    <dbReference type="NCBI Taxonomy" id="357804"/>
    <lineage>
        <taxon>Bacteria</taxon>
        <taxon>Pseudomonadati</taxon>
        <taxon>Pseudomonadota</taxon>
        <taxon>Gammaproteobacteria</taxon>
        <taxon>Alteromonadales</taxon>
        <taxon>Psychromonadaceae</taxon>
        <taxon>Psychromonas</taxon>
    </lineage>
</organism>
<accession>A1SS94</accession>